<dbReference type="EMBL" id="CP001014">
    <property type="protein sequence ID" value="ACB40503.1"/>
    <property type="molecule type" value="Genomic_DNA"/>
</dbReference>
<dbReference type="RefSeq" id="WP_012350922.1">
    <property type="nucleotide sequence ID" value="NC_010525.1"/>
</dbReference>
<dbReference type="SMR" id="B1Y9V3"/>
<dbReference type="STRING" id="444157.Tneu_1579"/>
<dbReference type="GeneID" id="6166094"/>
<dbReference type="KEGG" id="tne:Tneu_1579"/>
<dbReference type="eggNOG" id="arCOG01950">
    <property type="taxonomic scope" value="Archaea"/>
</dbReference>
<dbReference type="HOGENOM" id="CLU_190191_0_0_2"/>
<dbReference type="OrthoDB" id="55506at2157"/>
<dbReference type="Proteomes" id="UP000001694">
    <property type="component" value="Chromosome"/>
</dbReference>
<dbReference type="GO" id="GO:1990904">
    <property type="term" value="C:ribonucleoprotein complex"/>
    <property type="evidence" value="ECO:0007669"/>
    <property type="project" value="UniProtKB-KW"/>
</dbReference>
<dbReference type="GO" id="GO:0005840">
    <property type="term" value="C:ribosome"/>
    <property type="evidence" value="ECO:0007669"/>
    <property type="project" value="UniProtKB-KW"/>
</dbReference>
<dbReference type="GO" id="GO:0019843">
    <property type="term" value="F:rRNA binding"/>
    <property type="evidence" value="ECO:0007669"/>
    <property type="project" value="UniProtKB-UniRule"/>
</dbReference>
<dbReference type="GO" id="GO:0003735">
    <property type="term" value="F:structural constituent of ribosome"/>
    <property type="evidence" value="ECO:0007669"/>
    <property type="project" value="InterPro"/>
</dbReference>
<dbReference type="GO" id="GO:0008270">
    <property type="term" value="F:zinc ion binding"/>
    <property type="evidence" value="ECO:0007669"/>
    <property type="project" value="UniProtKB-UniRule"/>
</dbReference>
<dbReference type="GO" id="GO:0006412">
    <property type="term" value="P:translation"/>
    <property type="evidence" value="ECO:0007669"/>
    <property type="project" value="UniProtKB-UniRule"/>
</dbReference>
<dbReference type="CDD" id="cd00472">
    <property type="entry name" value="Ribosomal_L24e_L24"/>
    <property type="match status" value="1"/>
</dbReference>
<dbReference type="Gene3D" id="2.30.170.20">
    <property type="entry name" value="Ribosomal protein L24e"/>
    <property type="match status" value="1"/>
</dbReference>
<dbReference type="HAMAP" id="MF_00773">
    <property type="entry name" value="Ribosomal_eL24"/>
    <property type="match status" value="1"/>
</dbReference>
<dbReference type="InterPro" id="IPR038630">
    <property type="entry name" value="L24e/L24_sf"/>
</dbReference>
<dbReference type="InterPro" id="IPR056366">
    <property type="entry name" value="Ribosomal_eL24"/>
</dbReference>
<dbReference type="InterPro" id="IPR055345">
    <property type="entry name" value="Ribosomal_eL24-rel_arc"/>
</dbReference>
<dbReference type="InterPro" id="IPR000988">
    <property type="entry name" value="Ribosomal_eL24-rel_N"/>
</dbReference>
<dbReference type="InterPro" id="IPR023442">
    <property type="entry name" value="Ribosomal_eL24_CS"/>
</dbReference>
<dbReference type="InterPro" id="IPR011017">
    <property type="entry name" value="TRASH_dom"/>
</dbReference>
<dbReference type="NCBIfam" id="NF034186">
    <property type="entry name" value="PRK14891.1-1"/>
    <property type="match status" value="1"/>
</dbReference>
<dbReference type="PANTHER" id="PTHR10792">
    <property type="entry name" value="60S RIBOSOMAL PROTEIN L24"/>
    <property type="match status" value="1"/>
</dbReference>
<dbReference type="PANTHER" id="PTHR10792:SF1">
    <property type="entry name" value="RIBOSOMAL PROTEIN L24"/>
    <property type="match status" value="1"/>
</dbReference>
<dbReference type="Pfam" id="PF01246">
    <property type="entry name" value="Ribosomal_L24e"/>
    <property type="match status" value="1"/>
</dbReference>
<dbReference type="SMART" id="SM00746">
    <property type="entry name" value="TRASH"/>
    <property type="match status" value="1"/>
</dbReference>
<dbReference type="SUPFAM" id="SSF57716">
    <property type="entry name" value="Glucocorticoid receptor-like (DNA-binding domain)"/>
    <property type="match status" value="1"/>
</dbReference>
<dbReference type="PROSITE" id="PS01073">
    <property type="entry name" value="RIBOSOMAL_L24E"/>
    <property type="match status" value="1"/>
</dbReference>
<protein>
    <recommendedName>
        <fullName evidence="1">Large ribosomal subunit protein eL24</fullName>
    </recommendedName>
    <alternativeName>
        <fullName evidence="2">50S ribosomal protein L24e</fullName>
    </alternativeName>
</protein>
<accession>B1Y9V3</accession>
<name>RL24E_PYRNV</name>
<gene>
    <name evidence="1" type="primary">rpl24e</name>
    <name type="ordered locus">Tneu_1579</name>
</gene>
<organism>
    <name type="scientific">Pyrobaculum neutrophilum (strain DSM 2338 / JCM 9278 / NBRC 100436 / V24Sta)</name>
    <name type="common">Thermoproteus neutrophilus</name>
    <dbReference type="NCBI Taxonomy" id="444157"/>
    <lineage>
        <taxon>Archaea</taxon>
        <taxon>Thermoproteota</taxon>
        <taxon>Thermoprotei</taxon>
        <taxon>Thermoproteales</taxon>
        <taxon>Thermoproteaceae</taxon>
        <taxon>Pyrobaculum</taxon>
    </lineage>
</organism>
<evidence type="ECO:0000255" key="1">
    <source>
        <dbReference type="HAMAP-Rule" id="MF_00773"/>
    </source>
</evidence>
<evidence type="ECO:0000305" key="2"/>
<comment type="function">
    <text evidence="1">Binds to the 23S rRNA.</text>
</comment>
<comment type="cofactor">
    <cofactor evidence="1">
        <name>Zn(2+)</name>
        <dbReference type="ChEBI" id="CHEBI:29105"/>
    </cofactor>
    <text evidence="1">Binds 1 zinc ion per subunit.</text>
</comment>
<comment type="subunit">
    <text evidence="1">Part of the 50S ribosomal subunit. Forms a cluster with proteins L3 and L14.</text>
</comment>
<comment type="similarity">
    <text evidence="1">Belongs to the eukaryotic ribosomal protein eL24 family.</text>
</comment>
<keyword id="KW-0479">Metal-binding</keyword>
<keyword id="KW-0687">Ribonucleoprotein</keyword>
<keyword id="KW-0689">Ribosomal protein</keyword>
<keyword id="KW-0694">RNA-binding</keyword>
<keyword id="KW-0699">rRNA-binding</keyword>
<keyword id="KW-0862">Zinc</keyword>
<keyword id="KW-0863">Zinc-finger</keyword>
<reference key="1">
    <citation type="submission" date="2008-03" db="EMBL/GenBank/DDBJ databases">
        <title>Complete sequence of Thermoproteus neutrophilus V24Sta.</title>
        <authorList>
            <consortium name="US DOE Joint Genome Institute"/>
            <person name="Copeland A."/>
            <person name="Lucas S."/>
            <person name="Lapidus A."/>
            <person name="Glavina del Rio T."/>
            <person name="Dalin E."/>
            <person name="Tice H."/>
            <person name="Bruce D."/>
            <person name="Goodwin L."/>
            <person name="Pitluck S."/>
            <person name="Sims D."/>
            <person name="Brettin T."/>
            <person name="Detter J.C."/>
            <person name="Han C."/>
            <person name="Kuske C.R."/>
            <person name="Schmutz J."/>
            <person name="Larimer F."/>
            <person name="Land M."/>
            <person name="Hauser L."/>
            <person name="Kyrpides N."/>
            <person name="Mikhailova N."/>
            <person name="Biddle J.F."/>
            <person name="Zhang Z."/>
            <person name="Fitz-Gibbon S.T."/>
            <person name="Lowe T.M."/>
            <person name="Saltikov C."/>
            <person name="House C.H."/>
            <person name="Richardson P."/>
        </authorList>
    </citation>
    <scope>NUCLEOTIDE SEQUENCE [LARGE SCALE GENOMIC DNA]</scope>
    <source>
        <strain>DSM 2338 / JCM 9278 / NBRC 100436 / V24Sta</strain>
    </source>
</reference>
<sequence length="58" mass="6799">MKIHKCSFCGAEIPPGYGIMYVRNDGTIQRYCSRKCFVSATKYGRNPRKLAWVRKRQK</sequence>
<proteinExistence type="inferred from homology"/>
<feature type="chain" id="PRO_1000193989" description="Large ribosomal subunit protein eL24">
    <location>
        <begin position="1"/>
        <end position="58"/>
    </location>
</feature>
<feature type="zinc finger region" description="C4-type" evidence="1">
    <location>
        <begin position="6"/>
        <end position="36"/>
    </location>
</feature>
<feature type="binding site" evidence="1">
    <location>
        <position position="6"/>
    </location>
    <ligand>
        <name>Zn(2+)</name>
        <dbReference type="ChEBI" id="CHEBI:29105"/>
    </ligand>
</feature>
<feature type="binding site" evidence="1">
    <location>
        <position position="9"/>
    </location>
    <ligand>
        <name>Zn(2+)</name>
        <dbReference type="ChEBI" id="CHEBI:29105"/>
    </ligand>
</feature>
<feature type="binding site" evidence="1">
    <location>
        <position position="32"/>
    </location>
    <ligand>
        <name>Zn(2+)</name>
        <dbReference type="ChEBI" id="CHEBI:29105"/>
    </ligand>
</feature>
<feature type="binding site" evidence="1">
    <location>
        <position position="36"/>
    </location>
    <ligand>
        <name>Zn(2+)</name>
        <dbReference type="ChEBI" id="CHEBI:29105"/>
    </ligand>
</feature>